<comment type="similarity">
    <text evidence="3">Belongs to the aldo/keto reductase family.</text>
</comment>
<comment type="sequence caution" evidence="3">
    <conflict type="erroneous initiation">
        <sequence resource="EMBL-CDS" id="ABK65524"/>
    </conflict>
</comment>
<proteinExistence type="inferred from homology"/>
<reference key="1">
    <citation type="submission" date="2006-10" db="EMBL/GenBank/DDBJ databases">
        <authorList>
            <person name="Fleischmann R.D."/>
            <person name="Dodson R.J."/>
            <person name="Haft D.H."/>
            <person name="Merkel J.S."/>
            <person name="Nelson W.C."/>
            <person name="Fraser C.M."/>
        </authorList>
    </citation>
    <scope>NUCLEOTIDE SEQUENCE [LARGE SCALE GENOMIC DNA]</scope>
    <source>
        <strain>104</strain>
    </source>
</reference>
<sequence length="284" mass="30340">MNELTGESGSAAPSIALNDENTMPVLGLGVAELSDDETERAVSAALEVGCRLIDTAAAYGNEAAVGRAIAASGIPRAELFVTTKLATSDQGFKGAMDACEASLERLGLDYVDLYLIHWPAPALGTYVNSFGGMIQSRGNGHARSIGVSNFTEEYLTTVIDLTFVTPAVNQIELHPLLNQEALRKTNAEHNVVTQSYTPLALGKLNDHPTVNSVAAEYGKTASQVLLRWNLQLGNAVIFRSANAEHIASDFDVFDFELAAEHMDAINALNDGTRLRPDPDTYEGS</sequence>
<name>Y3816_MYCA1</name>
<accession>A0QJ99</accession>
<keyword id="KW-0521">NADP</keyword>
<keyword id="KW-0560">Oxidoreductase</keyword>
<protein>
    <recommendedName>
        <fullName evidence="1">Aldo-keto reductase MAV_3816</fullName>
        <ecNumber evidence="1">1.1.1.-</ecNumber>
    </recommendedName>
</protein>
<gene>
    <name type="ordered locus">MAV_3816</name>
</gene>
<feature type="chain" id="PRO_0000380730" description="Aldo-keto reductase MAV_3816">
    <location>
        <begin position="1"/>
        <end position="284"/>
    </location>
</feature>
<feature type="active site" description="Proton donor" evidence="2">
    <location>
        <position position="59"/>
    </location>
</feature>
<feature type="binding site" evidence="1">
    <location>
        <position position="199"/>
    </location>
    <ligand>
        <name>NADPH</name>
        <dbReference type="ChEBI" id="CHEBI:57783"/>
    </ligand>
</feature>
<feature type="binding site" evidence="1">
    <location>
        <position position="237"/>
    </location>
    <ligand>
        <name>NADPH</name>
        <dbReference type="ChEBI" id="CHEBI:57783"/>
    </ligand>
</feature>
<feature type="binding site" evidence="1">
    <location>
        <position position="239"/>
    </location>
    <ligand>
        <name>NADPH</name>
        <dbReference type="ChEBI" id="CHEBI:57783"/>
    </ligand>
</feature>
<feature type="binding site" evidence="1">
    <location>
        <position position="240"/>
    </location>
    <ligand>
        <name>NADPH</name>
        <dbReference type="ChEBI" id="CHEBI:57783"/>
    </ligand>
</feature>
<feature type="binding site" evidence="1">
    <location>
        <position position="241"/>
    </location>
    <ligand>
        <name>NADPH</name>
        <dbReference type="ChEBI" id="CHEBI:57783"/>
    </ligand>
</feature>
<feature type="binding site" evidence="1">
    <location>
        <position position="248"/>
    </location>
    <ligand>
        <name>NADPH</name>
        <dbReference type="ChEBI" id="CHEBI:57783"/>
    </ligand>
</feature>
<feature type="binding site" evidence="1">
    <location>
        <position position="275"/>
    </location>
    <ligand>
        <name>NADPH</name>
        <dbReference type="ChEBI" id="CHEBI:57783"/>
    </ligand>
</feature>
<dbReference type="EC" id="1.1.1.-" evidence="1"/>
<dbReference type="EMBL" id="CP000479">
    <property type="protein sequence ID" value="ABK65524.1"/>
    <property type="status" value="ALT_INIT"/>
    <property type="molecule type" value="Genomic_DNA"/>
</dbReference>
<dbReference type="SMR" id="A0QJ99"/>
<dbReference type="KEGG" id="mav:MAV_3816"/>
<dbReference type="HOGENOM" id="CLU_023205_0_1_11"/>
<dbReference type="Proteomes" id="UP000001574">
    <property type="component" value="Chromosome"/>
</dbReference>
<dbReference type="GO" id="GO:0004033">
    <property type="term" value="F:aldo-keto reductase (NADPH) activity"/>
    <property type="evidence" value="ECO:0007669"/>
    <property type="project" value="TreeGrafter"/>
</dbReference>
<dbReference type="CDD" id="cd19134">
    <property type="entry name" value="AKR_AKR5H1"/>
    <property type="match status" value="1"/>
</dbReference>
<dbReference type="FunFam" id="3.20.20.100:FF:000002">
    <property type="entry name" value="2,5-diketo-D-gluconic acid reductase A"/>
    <property type="match status" value="1"/>
</dbReference>
<dbReference type="Gene3D" id="3.20.20.100">
    <property type="entry name" value="NADP-dependent oxidoreductase domain"/>
    <property type="match status" value="1"/>
</dbReference>
<dbReference type="InterPro" id="IPR020471">
    <property type="entry name" value="AKR"/>
</dbReference>
<dbReference type="InterPro" id="IPR018170">
    <property type="entry name" value="Aldo/ket_reductase_CS"/>
</dbReference>
<dbReference type="InterPro" id="IPR023210">
    <property type="entry name" value="NADP_OxRdtase_dom"/>
</dbReference>
<dbReference type="InterPro" id="IPR036812">
    <property type="entry name" value="NADP_OxRdtase_dom_sf"/>
</dbReference>
<dbReference type="PANTHER" id="PTHR43827">
    <property type="entry name" value="2,5-DIKETO-D-GLUCONIC ACID REDUCTASE"/>
    <property type="match status" value="1"/>
</dbReference>
<dbReference type="PANTHER" id="PTHR43827:SF3">
    <property type="entry name" value="NADP-DEPENDENT OXIDOREDUCTASE DOMAIN-CONTAINING PROTEIN"/>
    <property type="match status" value="1"/>
</dbReference>
<dbReference type="Pfam" id="PF00248">
    <property type="entry name" value="Aldo_ket_red"/>
    <property type="match status" value="1"/>
</dbReference>
<dbReference type="PIRSF" id="PIRSF000097">
    <property type="entry name" value="AKR"/>
    <property type="match status" value="1"/>
</dbReference>
<dbReference type="PRINTS" id="PR00069">
    <property type="entry name" value="ALDKETRDTASE"/>
</dbReference>
<dbReference type="SUPFAM" id="SSF51430">
    <property type="entry name" value="NAD(P)-linked oxidoreductase"/>
    <property type="match status" value="1"/>
</dbReference>
<dbReference type="PROSITE" id="PS00062">
    <property type="entry name" value="ALDOKETO_REDUCTASE_2"/>
    <property type="match status" value="1"/>
</dbReference>
<organism>
    <name type="scientific">Mycobacterium avium (strain 104)</name>
    <dbReference type="NCBI Taxonomy" id="243243"/>
    <lineage>
        <taxon>Bacteria</taxon>
        <taxon>Bacillati</taxon>
        <taxon>Actinomycetota</taxon>
        <taxon>Actinomycetes</taxon>
        <taxon>Mycobacteriales</taxon>
        <taxon>Mycobacteriaceae</taxon>
        <taxon>Mycobacterium</taxon>
        <taxon>Mycobacterium avium complex (MAC)</taxon>
    </lineage>
</organism>
<evidence type="ECO:0000250" key="1">
    <source>
        <dbReference type="UniProtKB" id="A0QV09"/>
    </source>
</evidence>
<evidence type="ECO:0000250" key="2">
    <source>
        <dbReference type="UniProtKB" id="P80874"/>
    </source>
</evidence>
<evidence type="ECO:0000305" key="3"/>